<accession>Q9BZM3</accession>
<evidence type="ECO:0000250" key="1">
    <source>
        <dbReference type="UniProtKB" id="P31316"/>
    </source>
</evidence>
<evidence type="ECO:0000255" key="2">
    <source>
        <dbReference type="PROSITE-ProRule" id="PRU00108"/>
    </source>
</evidence>
<evidence type="ECO:0000256" key="3">
    <source>
        <dbReference type="SAM" id="MobiDB-lite"/>
    </source>
</evidence>
<evidence type="ECO:0000269" key="4">
    <source>
    </source>
</evidence>
<evidence type="ECO:0000269" key="5">
    <source>
    </source>
</evidence>
<evidence type="ECO:0000269" key="6">
    <source ref="1"/>
</evidence>
<evidence type="ECO:0000269" key="7">
    <source ref="2"/>
</evidence>
<evidence type="ECO:0000269" key="8">
    <source ref="3"/>
</evidence>
<evidence type="ECO:0000305" key="9"/>
<gene>
    <name type="primary">GSX2</name>
    <name type="synonym">GSH2</name>
</gene>
<sequence length="304" mass="32031">MSRSFYVDSLIIKDTSRPAPSLPEPHPGPDFFIPLGMPPPLVMSVSGPGCPSRKSGAFCVCPLCVTSHLHSSRGSVGAGSGGAGAGVTGAGGSGVAGAAGALPLLKGQFSSAPGDAQFCPRVNHAHHHHHPPQHHHHHHQPQQPGSAAAAAAAAAAAAAAAALGHPQHHAPVCTATTYNVADPRRFHCLTMGGSDASQVPNGKRMRTAFTSTQLLELEREFSSNMYLSRLRRIEIATYLNLSEKQVKIWFQNRRVKHKKEGKGTQRNSHAGCKCVGSQVHYARSEDEDSLSPASANDDKEISPL</sequence>
<organism>
    <name type="scientific">Homo sapiens</name>
    <name type="common">Human</name>
    <dbReference type="NCBI Taxonomy" id="9606"/>
    <lineage>
        <taxon>Eukaryota</taxon>
        <taxon>Metazoa</taxon>
        <taxon>Chordata</taxon>
        <taxon>Craniata</taxon>
        <taxon>Vertebrata</taxon>
        <taxon>Euteleostomi</taxon>
        <taxon>Mammalia</taxon>
        <taxon>Eutheria</taxon>
        <taxon>Euarchontoglires</taxon>
        <taxon>Primates</taxon>
        <taxon>Haplorrhini</taxon>
        <taxon>Catarrhini</taxon>
        <taxon>Hominidae</taxon>
        <taxon>Homo</taxon>
    </lineage>
</organism>
<keyword id="KW-0963">Cytoplasm</keyword>
<keyword id="KW-0217">Developmental protein</keyword>
<keyword id="KW-0225">Disease variant</keyword>
<keyword id="KW-0238">DNA-binding</keyword>
<keyword id="KW-1023">Dystonia</keyword>
<keyword id="KW-0371">Homeobox</keyword>
<keyword id="KW-0991">Intellectual disability</keyword>
<keyword id="KW-0539">Nucleus</keyword>
<keyword id="KW-1185">Reference proteome</keyword>
<keyword id="KW-0804">Transcription</keyword>
<keyword id="KW-0805">Transcription regulation</keyword>
<reference key="1">
    <citation type="submission" date="1999-06" db="EMBL/GenBank/DDBJ databases">
        <title>Human homeobox protein GSH-2.</title>
        <authorList>
            <person name="Sakai T."/>
            <person name="Sakamoto S."/>
            <person name="Nakamura K."/>
            <person name="Muraki T."/>
        </authorList>
    </citation>
    <scope>NUCLEOTIDE SEQUENCE [MRNA]</scope>
    <scope>VARIANT SER-107</scope>
</reference>
<reference key="2">
    <citation type="submission" date="2000-09" db="EMBL/GenBank/DDBJ databases">
        <title>The sequence of the human GSH2 gene.</title>
        <authorList>
            <person name="Cools J."/>
            <person name="Marynen P."/>
        </authorList>
    </citation>
    <scope>NUCLEOTIDE SEQUENCE [GENOMIC DNA]</scope>
    <scope>VARIANT SER-107</scope>
</reference>
<reference key="3">
    <citation type="submission" date="2001-10" db="EMBL/GenBank/DDBJ databases">
        <title>The genomic sequence of the human GSH-2 gene.</title>
        <authorList>
            <person name="Dauwerse H.G."/>
            <person name="Peters D.J.M."/>
            <person name="Breuning M.H."/>
        </authorList>
    </citation>
    <scope>NUCLEOTIDE SEQUENCE [GENOMIC DNA]</scope>
    <scope>VARIANT SER-107</scope>
</reference>
<reference key="4">
    <citation type="journal article" date="2005" name="Nature">
        <title>Generation and annotation of the DNA sequences of human chromosomes 2 and 4.</title>
        <authorList>
            <person name="Hillier L.W."/>
            <person name="Graves T.A."/>
            <person name="Fulton R.S."/>
            <person name="Fulton L.A."/>
            <person name="Pepin K.H."/>
            <person name="Minx P."/>
            <person name="Wagner-McPherson C."/>
            <person name="Layman D."/>
            <person name="Wylie K."/>
            <person name="Sekhon M."/>
            <person name="Becker M.C."/>
            <person name="Fewell G.A."/>
            <person name="Delehaunty K.D."/>
            <person name="Miner T.L."/>
            <person name="Nash W.E."/>
            <person name="Kremitzki C."/>
            <person name="Oddy L."/>
            <person name="Du H."/>
            <person name="Sun H."/>
            <person name="Bradshaw-Cordum H."/>
            <person name="Ali J."/>
            <person name="Carter J."/>
            <person name="Cordes M."/>
            <person name="Harris A."/>
            <person name="Isak A."/>
            <person name="van Brunt A."/>
            <person name="Nguyen C."/>
            <person name="Du F."/>
            <person name="Courtney L."/>
            <person name="Kalicki J."/>
            <person name="Ozersky P."/>
            <person name="Abbott S."/>
            <person name="Armstrong J."/>
            <person name="Belter E.A."/>
            <person name="Caruso L."/>
            <person name="Cedroni M."/>
            <person name="Cotton M."/>
            <person name="Davidson T."/>
            <person name="Desai A."/>
            <person name="Elliott G."/>
            <person name="Erb T."/>
            <person name="Fronick C."/>
            <person name="Gaige T."/>
            <person name="Haakenson W."/>
            <person name="Haglund K."/>
            <person name="Holmes A."/>
            <person name="Harkins R."/>
            <person name="Kim K."/>
            <person name="Kruchowski S.S."/>
            <person name="Strong C.M."/>
            <person name="Grewal N."/>
            <person name="Goyea E."/>
            <person name="Hou S."/>
            <person name="Levy A."/>
            <person name="Martinka S."/>
            <person name="Mead K."/>
            <person name="McLellan M.D."/>
            <person name="Meyer R."/>
            <person name="Randall-Maher J."/>
            <person name="Tomlinson C."/>
            <person name="Dauphin-Kohlberg S."/>
            <person name="Kozlowicz-Reilly A."/>
            <person name="Shah N."/>
            <person name="Swearengen-Shahid S."/>
            <person name="Snider J."/>
            <person name="Strong J.T."/>
            <person name="Thompson J."/>
            <person name="Yoakum M."/>
            <person name="Leonard S."/>
            <person name="Pearman C."/>
            <person name="Trani L."/>
            <person name="Radionenko M."/>
            <person name="Waligorski J.E."/>
            <person name="Wang C."/>
            <person name="Rock S.M."/>
            <person name="Tin-Wollam A.-M."/>
            <person name="Maupin R."/>
            <person name="Latreille P."/>
            <person name="Wendl M.C."/>
            <person name="Yang S.-P."/>
            <person name="Pohl C."/>
            <person name="Wallis J.W."/>
            <person name="Spieth J."/>
            <person name="Bieri T.A."/>
            <person name="Berkowicz N."/>
            <person name="Nelson J.O."/>
            <person name="Osborne J."/>
            <person name="Ding L."/>
            <person name="Meyer R."/>
            <person name="Sabo A."/>
            <person name="Shotland Y."/>
            <person name="Sinha P."/>
            <person name="Wohldmann P.E."/>
            <person name="Cook L.L."/>
            <person name="Hickenbotham M.T."/>
            <person name="Eldred J."/>
            <person name="Williams D."/>
            <person name="Jones T.A."/>
            <person name="She X."/>
            <person name="Ciccarelli F.D."/>
            <person name="Izaurralde E."/>
            <person name="Taylor J."/>
            <person name="Schmutz J."/>
            <person name="Myers R.M."/>
            <person name="Cox D.R."/>
            <person name="Huang X."/>
            <person name="McPherson J.D."/>
            <person name="Mardis E.R."/>
            <person name="Clifton S.W."/>
            <person name="Warren W.C."/>
            <person name="Chinwalla A.T."/>
            <person name="Eddy S.R."/>
            <person name="Marra M.A."/>
            <person name="Ovcharenko I."/>
            <person name="Furey T.S."/>
            <person name="Miller W."/>
            <person name="Eichler E.E."/>
            <person name="Bork P."/>
            <person name="Suyama M."/>
            <person name="Torrents D."/>
            <person name="Waterston R.H."/>
            <person name="Wilson R.K."/>
        </authorList>
    </citation>
    <scope>NUCLEOTIDE SEQUENCE [LARGE SCALE GENOMIC DNA]</scope>
</reference>
<reference key="5">
    <citation type="journal article" date="2004" name="Genome Res.">
        <title>The status, quality, and expansion of the NIH full-length cDNA project: the Mammalian Gene Collection (MGC).</title>
        <authorList>
            <consortium name="The MGC Project Team"/>
        </authorList>
    </citation>
    <scope>NUCLEOTIDE SEQUENCE [LARGE SCALE MRNA]</scope>
    <scope>VARIANT SER-107</scope>
    <source>
        <tissue>Brain</tissue>
    </source>
</reference>
<reference key="6">
    <citation type="journal article" date="2019" name="Brain">
        <title>Agenesis of the putamen and globus pallidus caused by recessive mutations in the homeobox gene GSX2.</title>
        <authorList>
            <person name="De Mori R."/>
            <person name="Severino M."/>
            <person name="Mancardi M.M."/>
            <person name="Anello D."/>
            <person name="Tardivo S."/>
            <person name="Biagini T."/>
            <person name="Capra V."/>
            <person name="Casella A."/>
            <person name="Cereda C."/>
            <person name="Copeland B.R."/>
            <person name="Gagliardi S."/>
            <person name="Gamucci A."/>
            <person name="Ginevrino M."/>
            <person name="Illi B."/>
            <person name="Lorefice E."/>
            <person name="Musaev D."/>
            <person name="Stanley V."/>
            <person name="Micalizzi A."/>
            <person name="Gleeson J.G."/>
            <person name="Mazza T."/>
            <person name="Rossi A."/>
            <person name="Valente E.M."/>
        </authorList>
    </citation>
    <scope>INVOLVEMENT IN DMJDS2</scope>
    <scope>VARIANTS DMJDS2 9-SER--LEU-304 DEL AND ARG-251</scope>
    <scope>CHARACTERIZATION OF VARIANTS DMJDS2 9-SER--LEU-304 DEL AND ARG-251</scope>
    <scope>FUNCTION</scope>
    <scope>SUBCELLULAR LOCATION</scope>
</reference>
<proteinExistence type="evidence at protein level"/>
<comment type="function">
    <text evidence="1 5">Transcription factor that binds 5'-CNAATTAG-3' DNA sequence and regulates the expression of numerous genes including genes important for brain development (PubMed:31412107). During telencephalic development, causes ventralization of pallial progenitors and, depending on the developmental stage, specifies different neuronal fates. At early stages, necessary and sufficient to correctly specify the ventral lateral ganglionic eminence (LGE) and its major derivatives, the striatal projection neurons. At later stages, may specify LGE progenitors toward dorsal LGE fates, including olfactory bulb interneurons (By similarity).</text>
</comment>
<comment type="subcellular location">
    <subcellularLocation>
        <location evidence="2 5">Nucleus</location>
    </subcellularLocation>
    <subcellularLocation>
        <location evidence="5">Cytoplasm</location>
    </subcellularLocation>
</comment>
<comment type="disease" evidence="5">
    <disease id="DI-05683">
        <name>Diencephalic-mesencephalic junction dysplasia syndrome 2</name>
        <acronym>DMJDS2</acronym>
        <description>An autosomal recessive neurodevelopmental disorder with onset at birth, characterized by severe global developmental delay, hypotonia, spastic tetraparesis, generalized dystonia and severe intellectual impairment. Brain imaging shows a unique brain malformation characterized by agenesis of putamina and globi pallidi, dysgenesis of the caudate nuclei, olfactory bulbs hypoplasia, and anomaly of the diencephalic-mesencephalic junction with abnormal corticospinal tract course.</description>
        <dbReference type="MIM" id="618646"/>
    </disease>
    <text>The disease is caused by variants affecting the gene represented in this entry.</text>
</comment>
<comment type="similarity">
    <text evidence="9">Belongs to the Antp homeobox family.</text>
</comment>
<dbReference type="EMBL" id="AB028838">
    <property type="protein sequence ID" value="BAB84822.1"/>
    <property type="molecule type" value="mRNA"/>
</dbReference>
<dbReference type="EMBL" id="AF306344">
    <property type="protein sequence ID" value="AAK00880.1"/>
    <property type="molecule type" value="Genomic_DNA"/>
</dbReference>
<dbReference type="EMBL" id="AF306343">
    <property type="protein sequence ID" value="AAK00880.1"/>
    <property type="status" value="JOINED"/>
    <property type="molecule type" value="Genomic_DNA"/>
</dbReference>
<dbReference type="EMBL" id="AF439445">
    <property type="protein sequence ID" value="AAM08285.1"/>
    <property type="molecule type" value="Genomic_DNA"/>
</dbReference>
<dbReference type="EMBL" id="AC110298">
    <property type="status" value="NOT_ANNOTATED_CDS"/>
    <property type="molecule type" value="Genomic_DNA"/>
</dbReference>
<dbReference type="EMBL" id="BC075089">
    <property type="protein sequence ID" value="AAH75089.1"/>
    <property type="molecule type" value="mRNA"/>
</dbReference>
<dbReference type="EMBL" id="BC075090">
    <property type="protein sequence ID" value="AAH75090.1"/>
    <property type="molecule type" value="mRNA"/>
</dbReference>
<dbReference type="CCDS" id="CCDS3494.1"/>
<dbReference type="RefSeq" id="NP_573574.2">
    <property type="nucleotide sequence ID" value="NM_133267.3"/>
</dbReference>
<dbReference type="SMR" id="Q9BZM3"/>
<dbReference type="BioGRID" id="128089">
    <property type="interactions" value="5"/>
</dbReference>
<dbReference type="FunCoup" id="Q9BZM3">
    <property type="interactions" value="1203"/>
</dbReference>
<dbReference type="IntAct" id="Q9BZM3">
    <property type="interactions" value="4"/>
</dbReference>
<dbReference type="STRING" id="9606.ENSP00000319118"/>
<dbReference type="BioMuta" id="GSX2"/>
<dbReference type="DMDM" id="296434530"/>
<dbReference type="MassIVE" id="Q9BZM3"/>
<dbReference type="PaxDb" id="9606-ENSP00000319118"/>
<dbReference type="PeptideAtlas" id="Q9BZM3"/>
<dbReference type="ProteomicsDB" id="79876"/>
<dbReference type="Antibodypedia" id="12271">
    <property type="antibodies" value="107 antibodies from 22 providers"/>
</dbReference>
<dbReference type="DNASU" id="170825"/>
<dbReference type="Ensembl" id="ENST00000326902.7">
    <property type="protein sequence ID" value="ENSP00000319118.2"/>
    <property type="gene ID" value="ENSG00000180613.11"/>
</dbReference>
<dbReference type="GeneID" id="170825"/>
<dbReference type="KEGG" id="hsa:170825"/>
<dbReference type="MANE-Select" id="ENST00000326902.7">
    <property type="protein sequence ID" value="ENSP00000319118.2"/>
    <property type="RefSeq nucleotide sequence ID" value="NM_133267.3"/>
    <property type="RefSeq protein sequence ID" value="NP_573574.2"/>
</dbReference>
<dbReference type="UCSC" id="uc010igp.2">
    <property type="organism name" value="human"/>
</dbReference>
<dbReference type="AGR" id="HGNC:24959"/>
<dbReference type="CTD" id="170825"/>
<dbReference type="DisGeNET" id="170825"/>
<dbReference type="GeneCards" id="GSX2"/>
<dbReference type="HGNC" id="HGNC:24959">
    <property type="gene designation" value="GSX2"/>
</dbReference>
<dbReference type="HPA" id="ENSG00000180613">
    <property type="expression patterns" value="Not detected"/>
</dbReference>
<dbReference type="MalaCards" id="GSX2"/>
<dbReference type="MIM" id="616253">
    <property type="type" value="gene"/>
</dbReference>
<dbReference type="MIM" id="618646">
    <property type="type" value="phenotype"/>
</dbReference>
<dbReference type="neXtProt" id="NX_Q9BZM3"/>
<dbReference type="OpenTargets" id="ENSG00000180613"/>
<dbReference type="Orphanet" id="319192">
    <property type="disease" value="Diencephalic-mesencephalic junction dysplasia"/>
</dbReference>
<dbReference type="PharmGKB" id="PA162390374"/>
<dbReference type="VEuPathDB" id="HostDB:ENSG00000180613"/>
<dbReference type="eggNOG" id="KOG0489">
    <property type="taxonomic scope" value="Eukaryota"/>
</dbReference>
<dbReference type="GeneTree" id="ENSGT00940000156043"/>
<dbReference type="HOGENOM" id="CLU_077153_0_0_1"/>
<dbReference type="InParanoid" id="Q9BZM3"/>
<dbReference type="OMA" id="CKCSTSQ"/>
<dbReference type="OrthoDB" id="6159439at2759"/>
<dbReference type="PAN-GO" id="Q9BZM3">
    <property type="GO annotations" value="3 GO annotations based on evolutionary models"/>
</dbReference>
<dbReference type="PhylomeDB" id="Q9BZM3"/>
<dbReference type="TreeFam" id="TF315938"/>
<dbReference type="PathwayCommons" id="Q9BZM3"/>
<dbReference type="SignaLink" id="Q9BZM3"/>
<dbReference type="BioGRID-ORCS" id="170825">
    <property type="hits" value="11 hits in 1167 CRISPR screens"/>
</dbReference>
<dbReference type="ChiTaRS" id="GSX2">
    <property type="organism name" value="human"/>
</dbReference>
<dbReference type="GenomeRNAi" id="170825"/>
<dbReference type="Pharos" id="Q9BZM3">
    <property type="development level" value="Tbio"/>
</dbReference>
<dbReference type="PRO" id="PR:Q9BZM3"/>
<dbReference type="Proteomes" id="UP000005640">
    <property type="component" value="Chromosome 4"/>
</dbReference>
<dbReference type="RNAct" id="Q9BZM3">
    <property type="molecule type" value="protein"/>
</dbReference>
<dbReference type="Bgee" id="ENSG00000180613">
    <property type="expression patterns" value="Expressed in amygdala and 41 other cell types or tissues"/>
</dbReference>
<dbReference type="ExpressionAtlas" id="Q9BZM3">
    <property type="expression patterns" value="baseline and differential"/>
</dbReference>
<dbReference type="GO" id="GO:0000785">
    <property type="term" value="C:chromatin"/>
    <property type="evidence" value="ECO:0000247"/>
    <property type="project" value="NTNU_SB"/>
</dbReference>
<dbReference type="GO" id="GO:0005737">
    <property type="term" value="C:cytoplasm"/>
    <property type="evidence" value="ECO:0000315"/>
    <property type="project" value="UniProtKB"/>
</dbReference>
<dbReference type="GO" id="GO:0005634">
    <property type="term" value="C:nucleus"/>
    <property type="evidence" value="ECO:0000315"/>
    <property type="project" value="UniProtKB"/>
</dbReference>
<dbReference type="GO" id="GO:0000981">
    <property type="term" value="F:DNA-binding transcription factor activity, RNA polymerase II-specific"/>
    <property type="evidence" value="ECO:0000315"/>
    <property type="project" value="UniProtKB"/>
</dbReference>
<dbReference type="GO" id="GO:1990837">
    <property type="term" value="F:sequence-specific double-stranded DNA binding"/>
    <property type="evidence" value="ECO:0000314"/>
    <property type="project" value="ARUK-UCL"/>
</dbReference>
<dbReference type="GO" id="GO:0021798">
    <property type="term" value="P:forebrain dorsal/ventral pattern formation"/>
    <property type="evidence" value="ECO:0007669"/>
    <property type="project" value="Ensembl"/>
</dbReference>
<dbReference type="GO" id="GO:0048853">
    <property type="term" value="P:forebrain morphogenesis"/>
    <property type="evidence" value="ECO:0007669"/>
    <property type="project" value="Ensembl"/>
</dbReference>
<dbReference type="GO" id="GO:0097154">
    <property type="term" value="P:GABAergic neuron differentiation"/>
    <property type="evidence" value="ECO:0007669"/>
    <property type="project" value="Ensembl"/>
</dbReference>
<dbReference type="GO" id="GO:0021575">
    <property type="term" value="P:hindbrain morphogenesis"/>
    <property type="evidence" value="ECO:0007669"/>
    <property type="project" value="Ensembl"/>
</dbReference>
<dbReference type="GO" id="GO:0048665">
    <property type="term" value="P:neuron fate specification"/>
    <property type="evidence" value="ECO:0007669"/>
    <property type="project" value="Ensembl"/>
</dbReference>
<dbReference type="GO" id="GO:0007219">
    <property type="term" value="P:Notch signaling pathway"/>
    <property type="evidence" value="ECO:0007669"/>
    <property type="project" value="Ensembl"/>
</dbReference>
<dbReference type="GO" id="GO:0021889">
    <property type="term" value="P:olfactory bulb interneuron differentiation"/>
    <property type="evidence" value="ECO:0007669"/>
    <property type="project" value="Ensembl"/>
</dbReference>
<dbReference type="GO" id="GO:0045747">
    <property type="term" value="P:positive regulation of Notch signaling pathway"/>
    <property type="evidence" value="ECO:0007669"/>
    <property type="project" value="Ensembl"/>
</dbReference>
<dbReference type="GO" id="GO:0048714">
    <property type="term" value="P:positive regulation of oligodendrocyte differentiation"/>
    <property type="evidence" value="ECO:0007669"/>
    <property type="project" value="Ensembl"/>
</dbReference>
<dbReference type="GO" id="GO:0030334">
    <property type="term" value="P:regulation of cell migration"/>
    <property type="evidence" value="ECO:0007669"/>
    <property type="project" value="Ensembl"/>
</dbReference>
<dbReference type="GO" id="GO:0002087">
    <property type="term" value="P:regulation of respiratory gaseous exchange by nervous system process"/>
    <property type="evidence" value="ECO:0007669"/>
    <property type="project" value="Ensembl"/>
</dbReference>
<dbReference type="GO" id="GO:0021527">
    <property type="term" value="P:spinal cord association neuron differentiation"/>
    <property type="evidence" value="ECO:0007669"/>
    <property type="project" value="Ensembl"/>
</dbReference>
<dbReference type="GO" id="GO:0060163">
    <property type="term" value="P:subpallium neuron fate commitment"/>
    <property type="evidence" value="ECO:0007669"/>
    <property type="project" value="Ensembl"/>
</dbReference>
<dbReference type="GO" id="GO:0021978">
    <property type="term" value="P:telencephalon regionalization"/>
    <property type="evidence" value="ECO:0007669"/>
    <property type="project" value="Ensembl"/>
</dbReference>
<dbReference type="CDD" id="cd00086">
    <property type="entry name" value="homeodomain"/>
    <property type="match status" value="1"/>
</dbReference>
<dbReference type="FunFam" id="1.10.10.60:FF:000147">
    <property type="entry name" value="GS homeobox 2"/>
    <property type="match status" value="1"/>
</dbReference>
<dbReference type="Gene3D" id="1.10.10.60">
    <property type="entry name" value="Homeodomain-like"/>
    <property type="match status" value="1"/>
</dbReference>
<dbReference type="InterPro" id="IPR042191">
    <property type="entry name" value="GSH1/2"/>
</dbReference>
<dbReference type="InterPro" id="IPR001356">
    <property type="entry name" value="HD"/>
</dbReference>
<dbReference type="InterPro" id="IPR020479">
    <property type="entry name" value="HD_metazoa"/>
</dbReference>
<dbReference type="InterPro" id="IPR017970">
    <property type="entry name" value="Homeobox_CS"/>
</dbReference>
<dbReference type="InterPro" id="IPR009057">
    <property type="entry name" value="Homeodomain-like_sf"/>
</dbReference>
<dbReference type="PANTHER" id="PTHR47421">
    <property type="entry name" value="GS HOMEOBOX 2"/>
    <property type="match status" value="1"/>
</dbReference>
<dbReference type="PANTHER" id="PTHR47421:SF1">
    <property type="entry name" value="GS HOMEOBOX 2"/>
    <property type="match status" value="1"/>
</dbReference>
<dbReference type="Pfam" id="PF00046">
    <property type="entry name" value="Homeodomain"/>
    <property type="match status" value="1"/>
</dbReference>
<dbReference type="PRINTS" id="PR00024">
    <property type="entry name" value="HOMEOBOX"/>
</dbReference>
<dbReference type="SMART" id="SM00389">
    <property type="entry name" value="HOX"/>
    <property type="match status" value="1"/>
</dbReference>
<dbReference type="SUPFAM" id="SSF46689">
    <property type="entry name" value="Homeodomain-like"/>
    <property type="match status" value="1"/>
</dbReference>
<dbReference type="PROSITE" id="PS00027">
    <property type="entry name" value="HOMEOBOX_1"/>
    <property type="match status" value="1"/>
</dbReference>
<dbReference type="PROSITE" id="PS50071">
    <property type="entry name" value="HOMEOBOX_2"/>
    <property type="match status" value="1"/>
</dbReference>
<name>GSX2_HUMAN</name>
<protein>
    <recommendedName>
        <fullName>GS homeobox 2</fullName>
    </recommendedName>
    <alternativeName>
        <fullName>Genetic-screened homeobox 2</fullName>
    </alternativeName>
    <alternativeName>
        <fullName>Homeobox protein GSH-2</fullName>
    </alternativeName>
</protein>
<feature type="chain" id="PRO_0000048896" description="GS homeobox 2">
    <location>
        <begin position="1"/>
        <end position="304"/>
    </location>
</feature>
<feature type="DNA-binding region" description="Homeobox" evidence="2">
    <location>
        <begin position="202"/>
        <end position="261"/>
    </location>
</feature>
<feature type="region of interest" description="Disordered" evidence="3">
    <location>
        <begin position="116"/>
        <end position="151"/>
    </location>
</feature>
<feature type="region of interest" description="Disordered" evidence="3">
    <location>
        <begin position="283"/>
        <end position="304"/>
    </location>
</feature>
<feature type="compositionally biased region" description="Basic residues" evidence="3">
    <location>
        <begin position="123"/>
        <end position="140"/>
    </location>
</feature>
<feature type="compositionally biased region" description="Low complexity" evidence="3">
    <location>
        <begin position="141"/>
        <end position="151"/>
    </location>
</feature>
<feature type="sequence variant" id="VAR_083532" description="In DMJDS2; loss of protein expression." evidence="5">
    <location>
        <begin position="9"/>
        <end position="304"/>
    </location>
</feature>
<feature type="sequence variant" id="VAR_049580" description="In dbSNP:rs13144341." evidence="4 6 7 8">
    <original>G</original>
    <variation>S</variation>
    <location>
        <position position="107"/>
    </location>
</feature>
<feature type="sequence variant" id="VAR_083533" description="In DMJDS2; decreased protein abundance; decreased nuclear localization; increased localization to the cytoplasm; changed regulation of gene expression; dbSNP:rs1578005344." evidence="5">
    <original>Q</original>
    <variation>R</variation>
    <location>
        <position position="251"/>
    </location>
</feature>